<accession>P0C8H5</accession>
<protein>
    <recommendedName>
        <fullName>Apoptosis regulator Bcl-2 homolog</fullName>
    </recommendedName>
</protein>
<evidence type="ECO:0000250" key="1">
    <source>
        <dbReference type="UniProtKB" id="P42485"/>
    </source>
</evidence>
<evidence type="ECO:0000250" key="2">
    <source>
        <dbReference type="UniProtKB" id="Q07819"/>
    </source>
</evidence>
<evidence type="ECO:0000255" key="3"/>
<evidence type="ECO:0000305" key="4"/>
<reference key="1">
    <citation type="submission" date="2003-03" db="EMBL/GenBank/DDBJ databases">
        <title>African swine fever virus genomes.</title>
        <authorList>
            <person name="Kutish G.F."/>
            <person name="Rock D.L."/>
        </authorList>
    </citation>
    <scope>NUCLEOTIDE SEQUENCE [LARGE SCALE GENOMIC DNA]</scope>
</reference>
<organism>
    <name type="scientific">African swine fever virus (isolate Tick/South Africa/Pretoriuskop Pr4/1996)</name>
    <name type="common">ASFV</name>
    <dbReference type="NCBI Taxonomy" id="561443"/>
    <lineage>
        <taxon>Viruses</taxon>
        <taxon>Varidnaviria</taxon>
        <taxon>Bamfordvirae</taxon>
        <taxon>Nucleocytoviricota</taxon>
        <taxon>Pokkesviricetes</taxon>
        <taxon>Asfuvirales</taxon>
        <taxon>Asfarviridae</taxon>
        <taxon>Asfivirus</taxon>
        <taxon>African swine fever virus</taxon>
    </lineage>
</organism>
<dbReference type="EMBL" id="AY261363">
    <property type="status" value="NOT_ANNOTATED_CDS"/>
    <property type="molecule type" value="Genomic_DNA"/>
</dbReference>
<dbReference type="SMR" id="P0C8H5"/>
<dbReference type="Proteomes" id="UP000000859">
    <property type="component" value="Segment"/>
</dbReference>
<dbReference type="GO" id="GO:0044165">
    <property type="term" value="C:host cell endoplasmic reticulum"/>
    <property type="evidence" value="ECO:0007669"/>
    <property type="project" value="UniProtKB-SubCell"/>
</dbReference>
<dbReference type="GO" id="GO:0033650">
    <property type="term" value="C:host cell mitochondrion"/>
    <property type="evidence" value="ECO:0007669"/>
    <property type="project" value="UniProtKB-SubCell"/>
</dbReference>
<dbReference type="GO" id="GO:0051400">
    <property type="term" value="F:BH domain binding"/>
    <property type="evidence" value="ECO:0007669"/>
    <property type="project" value="TreeGrafter"/>
</dbReference>
<dbReference type="GO" id="GO:0042981">
    <property type="term" value="P:regulation of apoptotic process"/>
    <property type="evidence" value="ECO:0007669"/>
    <property type="project" value="InterPro"/>
</dbReference>
<dbReference type="GO" id="GO:0033668">
    <property type="term" value="P:symbiont-mediated suppression of host apoptosis"/>
    <property type="evidence" value="ECO:0007669"/>
    <property type="project" value="UniProtKB-KW"/>
</dbReference>
<dbReference type="Gene3D" id="1.10.437.10">
    <property type="entry name" value="Blc2-like"/>
    <property type="match status" value="1"/>
</dbReference>
<dbReference type="InterPro" id="IPR036834">
    <property type="entry name" value="Bcl-2-like_sf"/>
</dbReference>
<dbReference type="InterPro" id="IPR046371">
    <property type="entry name" value="Bcl-2_BH1-3"/>
</dbReference>
<dbReference type="InterPro" id="IPR026298">
    <property type="entry name" value="Bcl-2_fam"/>
</dbReference>
<dbReference type="InterPro" id="IPR002475">
    <property type="entry name" value="Bcl2-like"/>
</dbReference>
<dbReference type="InterPro" id="IPR020717">
    <property type="entry name" value="Bcl2_BH1_motif_CS"/>
</dbReference>
<dbReference type="InterPro" id="IPR020726">
    <property type="entry name" value="Bcl2_BH2_motif_CS"/>
</dbReference>
<dbReference type="PANTHER" id="PTHR11256:SF62">
    <property type="entry name" value="BCL-2 BCL-2 HOMOLOGY REGION 1-3 DOMAIN-CONTAINING PROTEIN"/>
    <property type="match status" value="1"/>
</dbReference>
<dbReference type="PANTHER" id="PTHR11256">
    <property type="entry name" value="BCL-2 RELATED"/>
    <property type="match status" value="1"/>
</dbReference>
<dbReference type="Pfam" id="PF00452">
    <property type="entry name" value="Bcl-2"/>
    <property type="match status" value="1"/>
</dbReference>
<dbReference type="PRINTS" id="PR01862">
    <property type="entry name" value="BCL2FAMILY"/>
</dbReference>
<dbReference type="SMART" id="SM00337">
    <property type="entry name" value="BCL"/>
    <property type="match status" value="1"/>
</dbReference>
<dbReference type="SUPFAM" id="SSF56854">
    <property type="entry name" value="Bcl-2 inhibitors of programmed cell death"/>
    <property type="match status" value="1"/>
</dbReference>
<dbReference type="PROSITE" id="PS50062">
    <property type="entry name" value="BCL2_FAMILY"/>
    <property type="match status" value="1"/>
</dbReference>
<dbReference type="PROSITE" id="PS01080">
    <property type="entry name" value="BH1"/>
    <property type="match status" value="1"/>
</dbReference>
<dbReference type="PROSITE" id="PS01258">
    <property type="entry name" value="BH2"/>
    <property type="match status" value="1"/>
</dbReference>
<feature type="chain" id="PRO_0000355217" description="Apoptosis regulator Bcl-2 homolog">
    <location>
        <begin position="1"/>
        <end position="179"/>
    </location>
</feature>
<feature type="short sequence motif" description="BH1" evidence="3">
    <location>
        <begin position="76"/>
        <end position="95"/>
    </location>
</feature>
<feature type="short sequence motif" description="BH2" evidence="3">
    <location>
        <begin position="126"/>
        <end position="141"/>
    </location>
</feature>
<proteinExistence type="inferred from homology"/>
<comment type="function">
    <text evidence="1">Suppresses apoptosis in host cell to promote the viral replication (By similarity). Has the ability to potentially bind to all the members of the proapoptotic Bcl-2 family (By similarity). Inhibits autophagy by interacting with host Beclin 1 (BECN1) (By similarity).</text>
</comment>
<comment type="subunit">
    <text evidence="1">Interacts with host BECN1 (via BH3 homology domain); this interaction allows the virus to inhibit BECN1, and thus autophagy (By similarity). Interacts with host BID (By similarity). Interacts with host BAX (By similarity).</text>
</comment>
<comment type="subcellular location">
    <subcellularLocation>
        <location evidence="1">Host mitochondrion</location>
    </subcellularLocation>
    <subcellularLocation>
        <location evidence="1">Host endoplasmic reticulum</location>
    </subcellularLocation>
</comment>
<comment type="induction">
    <text evidence="2">Expressed in the early phase of the viral replicative cycle (By similarity). Expressed in the late phase of the viral replicative cycle (By similarity).</text>
</comment>
<comment type="similarity">
    <text evidence="4">Belongs to the Bcl-2 family.</text>
</comment>
<organismHost>
    <name type="scientific">Ornithodoros</name>
    <name type="common">relapsing fever ticks</name>
    <dbReference type="NCBI Taxonomy" id="6937"/>
</organismHost>
<organismHost>
    <name type="scientific">Phacochoerus aethiopicus</name>
    <name type="common">Warthog</name>
    <dbReference type="NCBI Taxonomy" id="85517"/>
</organismHost>
<organismHost>
    <name type="scientific">Phacochoerus africanus</name>
    <name type="common">Warthog</name>
    <dbReference type="NCBI Taxonomy" id="41426"/>
</organismHost>
<organismHost>
    <name type="scientific">Potamochoerus larvatus</name>
    <name type="common">Bushpig</name>
    <dbReference type="NCBI Taxonomy" id="273792"/>
</organismHost>
<organismHost>
    <name type="scientific">Sus scrofa</name>
    <name type="common">Pig</name>
    <dbReference type="NCBI Taxonomy" id="9823"/>
</organismHost>
<keyword id="KW-0244">Early protein</keyword>
<keyword id="KW-1038">Host endoplasmic reticulum</keyword>
<keyword id="KW-1045">Host mitochondrion</keyword>
<keyword id="KW-0945">Host-virus interaction</keyword>
<keyword id="KW-1081">Inhibition of host apoptosis by viral BCL2-like protein</keyword>
<keyword id="KW-0426">Late protein</keyword>
<keyword id="KW-1119">Modulation of host cell apoptosis by virus</keyword>
<name>ARBH_ASFP4</name>
<gene>
    <name type="ordered locus">Pret-053</name>
</gene>
<sequence>MEGEELIYHNIINEILVGYIKYYINDISEHELSPYQQQIKKILTYYDECLNKQVTITFSLTSAQEIKTQFTGVVTELFKDLINWGRICGFIVFSAKMAKYCKDANNHLESTVITTAYNFMKHNLLPWMISHGGQEEFLAFSLHSDIYSVIFNIKYFLSKFCNHMFFRSCVQLLRNCNLI</sequence>